<organism>
    <name type="scientific">Staphylococcus aureus (strain JH9)</name>
    <dbReference type="NCBI Taxonomy" id="359786"/>
    <lineage>
        <taxon>Bacteria</taxon>
        <taxon>Bacillati</taxon>
        <taxon>Bacillota</taxon>
        <taxon>Bacilli</taxon>
        <taxon>Bacillales</taxon>
        <taxon>Staphylococcaceae</taxon>
        <taxon>Staphylococcus</taxon>
    </lineage>
</organism>
<protein>
    <recommendedName>
        <fullName evidence="1">Pantothenate synthetase</fullName>
        <shortName evidence="1">PS</shortName>
        <ecNumber evidence="1">6.3.2.1</ecNumber>
    </recommendedName>
    <alternativeName>
        <fullName evidence="1">Pantoate--beta-alanine ligase</fullName>
    </alternativeName>
    <alternativeName>
        <fullName evidence="1">Pantoate-activating enzyme</fullName>
    </alternativeName>
</protein>
<proteinExistence type="inferred from homology"/>
<keyword id="KW-0067">ATP-binding</keyword>
<keyword id="KW-0963">Cytoplasm</keyword>
<keyword id="KW-0436">Ligase</keyword>
<keyword id="KW-0547">Nucleotide-binding</keyword>
<keyword id="KW-0566">Pantothenate biosynthesis</keyword>
<accession>A5IW23</accession>
<feature type="chain" id="PRO_1000076869" description="Pantothenate synthetase">
    <location>
        <begin position="1"/>
        <end position="283"/>
    </location>
</feature>
<feature type="active site" description="Proton donor" evidence="1">
    <location>
        <position position="38"/>
    </location>
</feature>
<feature type="binding site" evidence="1">
    <location>
        <begin position="31"/>
        <end position="38"/>
    </location>
    <ligand>
        <name>ATP</name>
        <dbReference type="ChEBI" id="CHEBI:30616"/>
    </ligand>
</feature>
<feature type="binding site" evidence="1">
    <location>
        <position position="62"/>
    </location>
    <ligand>
        <name>(R)-pantoate</name>
        <dbReference type="ChEBI" id="CHEBI:15980"/>
    </ligand>
</feature>
<feature type="binding site" evidence="1">
    <location>
        <position position="62"/>
    </location>
    <ligand>
        <name>beta-alanine</name>
        <dbReference type="ChEBI" id="CHEBI:57966"/>
    </ligand>
</feature>
<feature type="binding site" evidence="1">
    <location>
        <begin position="148"/>
        <end position="151"/>
    </location>
    <ligand>
        <name>ATP</name>
        <dbReference type="ChEBI" id="CHEBI:30616"/>
    </ligand>
</feature>
<feature type="binding site" evidence="1">
    <location>
        <position position="154"/>
    </location>
    <ligand>
        <name>(R)-pantoate</name>
        <dbReference type="ChEBI" id="CHEBI:15980"/>
    </ligand>
</feature>
<feature type="binding site" evidence="1">
    <location>
        <position position="177"/>
    </location>
    <ligand>
        <name>ATP</name>
        <dbReference type="ChEBI" id="CHEBI:30616"/>
    </ligand>
</feature>
<feature type="binding site" evidence="1">
    <location>
        <begin position="185"/>
        <end position="188"/>
    </location>
    <ligand>
        <name>ATP</name>
        <dbReference type="ChEBI" id="CHEBI:30616"/>
    </ligand>
</feature>
<gene>
    <name evidence="1" type="primary">panC</name>
    <name type="ordered locus">SaurJH9_2620</name>
</gene>
<name>PANC_STAA9</name>
<sequence>MTKLITTVKEMQHIVKAAKRSGTTIGFIPTMGALHDGHLTMVRESVSTNDITVVSVFVNPLQFGPNEDFDAYPRQIDKDLELVSEVGADIVFHPAVEDIYPGELGIDVKVGPLADVLEGAKRPGHFDGVVTVVNKLFNIVMPDYAYFGKKDAQQLAIVEQMVKDFNHAVEIIGIDIVREADGLAKSSRNVYLTEQERQEAVHLSKSLLLAQALYQDGERQSKVIIDRVTEYLESHISGRIEEVAVYSYPQLVEQHEITGRIFISLAVKFSKARLIDNIIIGAE</sequence>
<reference key="1">
    <citation type="submission" date="2007-05" db="EMBL/GenBank/DDBJ databases">
        <title>Complete sequence of chromosome of Staphylococcus aureus subsp. aureus JH9.</title>
        <authorList>
            <consortium name="US DOE Joint Genome Institute"/>
            <person name="Copeland A."/>
            <person name="Lucas S."/>
            <person name="Lapidus A."/>
            <person name="Barry K."/>
            <person name="Detter J.C."/>
            <person name="Glavina del Rio T."/>
            <person name="Hammon N."/>
            <person name="Israni S."/>
            <person name="Pitluck S."/>
            <person name="Chain P."/>
            <person name="Malfatti S."/>
            <person name="Shin M."/>
            <person name="Vergez L."/>
            <person name="Schmutz J."/>
            <person name="Larimer F."/>
            <person name="Land M."/>
            <person name="Hauser L."/>
            <person name="Kyrpides N."/>
            <person name="Kim E."/>
            <person name="Tomasz A."/>
            <person name="Richardson P."/>
        </authorList>
    </citation>
    <scope>NUCLEOTIDE SEQUENCE [LARGE SCALE GENOMIC DNA]</scope>
    <source>
        <strain>JH9</strain>
    </source>
</reference>
<evidence type="ECO:0000255" key="1">
    <source>
        <dbReference type="HAMAP-Rule" id="MF_00158"/>
    </source>
</evidence>
<comment type="function">
    <text evidence="1">Catalyzes the condensation of pantoate with beta-alanine in an ATP-dependent reaction via a pantoyl-adenylate intermediate.</text>
</comment>
<comment type="catalytic activity">
    <reaction evidence="1">
        <text>(R)-pantoate + beta-alanine + ATP = (R)-pantothenate + AMP + diphosphate + H(+)</text>
        <dbReference type="Rhea" id="RHEA:10912"/>
        <dbReference type="ChEBI" id="CHEBI:15378"/>
        <dbReference type="ChEBI" id="CHEBI:15980"/>
        <dbReference type="ChEBI" id="CHEBI:29032"/>
        <dbReference type="ChEBI" id="CHEBI:30616"/>
        <dbReference type="ChEBI" id="CHEBI:33019"/>
        <dbReference type="ChEBI" id="CHEBI:57966"/>
        <dbReference type="ChEBI" id="CHEBI:456215"/>
        <dbReference type="EC" id="6.3.2.1"/>
    </reaction>
</comment>
<comment type="pathway">
    <text evidence="1">Cofactor biosynthesis; (R)-pantothenate biosynthesis; (R)-pantothenate from (R)-pantoate and beta-alanine: step 1/1.</text>
</comment>
<comment type="subunit">
    <text evidence="1">Homodimer.</text>
</comment>
<comment type="subcellular location">
    <subcellularLocation>
        <location evidence="1">Cytoplasm</location>
    </subcellularLocation>
</comment>
<comment type="miscellaneous">
    <text evidence="1">The reaction proceeds by a bi uni uni bi ping pong mechanism.</text>
</comment>
<comment type="similarity">
    <text evidence="1">Belongs to the pantothenate synthetase family.</text>
</comment>
<dbReference type="EC" id="6.3.2.1" evidence="1"/>
<dbReference type="EMBL" id="CP000703">
    <property type="protein sequence ID" value="ABQ50396.1"/>
    <property type="molecule type" value="Genomic_DNA"/>
</dbReference>
<dbReference type="RefSeq" id="WP_000163737.1">
    <property type="nucleotide sequence ID" value="NC_009487.1"/>
</dbReference>
<dbReference type="SMR" id="A5IW23"/>
<dbReference type="KEGG" id="saj:SaurJH9_2620"/>
<dbReference type="HOGENOM" id="CLU_047148_0_0_9"/>
<dbReference type="UniPathway" id="UPA00028">
    <property type="reaction ID" value="UER00005"/>
</dbReference>
<dbReference type="GO" id="GO:0005829">
    <property type="term" value="C:cytosol"/>
    <property type="evidence" value="ECO:0007669"/>
    <property type="project" value="TreeGrafter"/>
</dbReference>
<dbReference type="GO" id="GO:0005524">
    <property type="term" value="F:ATP binding"/>
    <property type="evidence" value="ECO:0007669"/>
    <property type="project" value="UniProtKB-KW"/>
</dbReference>
<dbReference type="GO" id="GO:0004592">
    <property type="term" value="F:pantoate-beta-alanine ligase activity"/>
    <property type="evidence" value="ECO:0007669"/>
    <property type="project" value="UniProtKB-UniRule"/>
</dbReference>
<dbReference type="GO" id="GO:0015940">
    <property type="term" value="P:pantothenate biosynthetic process"/>
    <property type="evidence" value="ECO:0007669"/>
    <property type="project" value="UniProtKB-UniRule"/>
</dbReference>
<dbReference type="CDD" id="cd00560">
    <property type="entry name" value="PanC"/>
    <property type="match status" value="1"/>
</dbReference>
<dbReference type="FunFam" id="3.30.1300.10:FF:000001">
    <property type="entry name" value="Pantothenate synthetase"/>
    <property type="match status" value="1"/>
</dbReference>
<dbReference type="FunFam" id="3.40.50.620:FF:000013">
    <property type="entry name" value="Pantothenate synthetase"/>
    <property type="match status" value="1"/>
</dbReference>
<dbReference type="Gene3D" id="3.40.50.620">
    <property type="entry name" value="HUPs"/>
    <property type="match status" value="1"/>
</dbReference>
<dbReference type="Gene3D" id="3.30.1300.10">
    <property type="entry name" value="Pantoate-beta-alanine ligase, C-terminal domain"/>
    <property type="match status" value="1"/>
</dbReference>
<dbReference type="HAMAP" id="MF_00158">
    <property type="entry name" value="PanC"/>
    <property type="match status" value="1"/>
</dbReference>
<dbReference type="InterPro" id="IPR003721">
    <property type="entry name" value="Pantoate_ligase"/>
</dbReference>
<dbReference type="InterPro" id="IPR042176">
    <property type="entry name" value="Pantoate_ligase_C"/>
</dbReference>
<dbReference type="InterPro" id="IPR014729">
    <property type="entry name" value="Rossmann-like_a/b/a_fold"/>
</dbReference>
<dbReference type="NCBIfam" id="TIGR00018">
    <property type="entry name" value="panC"/>
    <property type="match status" value="1"/>
</dbReference>
<dbReference type="PANTHER" id="PTHR21299">
    <property type="entry name" value="CYTIDYLATE KINASE/PANTOATE-BETA-ALANINE LIGASE"/>
    <property type="match status" value="1"/>
</dbReference>
<dbReference type="PANTHER" id="PTHR21299:SF1">
    <property type="entry name" value="PANTOATE--BETA-ALANINE LIGASE"/>
    <property type="match status" value="1"/>
</dbReference>
<dbReference type="Pfam" id="PF02569">
    <property type="entry name" value="Pantoate_ligase"/>
    <property type="match status" value="1"/>
</dbReference>
<dbReference type="SUPFAM" id="SSF52374">
    <property type="entry name" value="Nucleotidylyl transferase"/>
    <property type="match status" value="1"/>
</dbReference>